<evidence type="ECO:0000250" key="1">
    <source>
        <dbReference type="UniProtKB" id="P38244"/>
    </source>
</evidence>
<evidence type="ECO:0000250" key="2">
    <source>
        <dbReference type="UniProtKB" id="P80561"/>
    </source>
</evidence>
<evidence type="ECO:0000255" key="3"/>
<evidence type="ECO:0000255" key="4">
    <source>
        <dbReference type="PROSITE-ProRule" id="PRU00498"/>
    </source>
</evidence>
<evidence type="ECO:0000256" key="5">
    <source>
        <dbReference type="SAM" id="MobiDB-lite"/>
    </source>
</evidence>
<evidence type="ECO:0000305" key="6"/>
<accession>D3UEH0</accession>
<comment type="function">
    <text evidence="1">May be involved in vacuolar sorting and osmoregulation.</text>
</comment>
<comment type="cofactor">
    <cofactor evidence="2">
        <name>Zn(2+)</name>
        <dbReference type="ChEBI" id="CHEBI:29105"/>
    </cofactor>
    <text evidence="2">Binds 2 Zn(2+) ions per subunit.</text>
</comment>
<comment type="subcellular location">
    <subcellularLocation>
        <location evidence="1">Vacuole membrane</location>
        <topology evidence="3">Multi-pass membrane protein</topology>
    </subcellularLocation>
</comment>
<comment type="similarity">
    <text evidence="6">Belongs to the peptidase M28 family.</text>
</comment>
<sequence>MKLKSVFRSVLKYRKTNLSLLLLITYSIITLLYIFDHERYKLNLPKEDEHPEFNDLLETAWGDLQIITASFHPYTSKENDKVHDYLLKRVLEITGNSSFASVSDDKESERSILFQQQDPFNESSRFSRVTYFESSNILVKLEGKNPEEEGLLLSAHFDSVPTGYGATDDGMGVVSLLANLKYHIKHRPNRTLIFNFNNNEEFGLLGASTYFNHSWSNLTKYVINLEGTGAGGKAVLFRTSDTSTAKIYQQSVKENPFGNSIYQQGFYSRYVRSETDYKIYEENGMRGWDVAFYKPRNLYHTIKDSIQYTSKASLWHMLHTSLQLSAYVASNSLDTADQTPACYFDFIGLKFFVISAKTLFYWNCIFLLVSPVVAIGLYLISRDRMTWKSHSWLSWTRFPLSLAAGIIVQKLFSNDIIRSNPLTFSRNYFWPISAFFTQVIFTSYVLINCSNFFFPCADMKSLSIIELFIILWTILLFTSKLLYSSDYRYTGLYPLSIFFLLSTIAAILRLLALALGMRTRKRLGRECRDHHSNYSSHSQIDMERDGQENLEQPQDQFTSSQDDQASIQDDNVSTTSAGPSHNVDEDHGMDSSSQQHDERVPLLKGSNSMEEGLSTRENSLKLEYTDYAWIIQFLLIVPIPSFILFNSVDVIMDALNHTVQEGSKATFDVLRFGMVGSILMALPILPFFYKVNYITISLTALLFLISASKTLLVHPFTNSNPLKVRFSQNIDLSQGNAASVHVLGREGNFLKPMLQDLPSIKYSSTHINCTSVTNGMELCMYDGMQPNLLSTNGNTNISSMVKVHVLHNNRNSTERSPYEPIVAELLLEVKENRACTLTFESRHQAKSPVREITVYQKKNSAPQKTNITKTIKSASGINELQLHKLDFDQETYHIGVQWFPKLLTDGNLEDDKLGTKDELSVSISCYWGEYDSESVVNGTAVRKIPAFDELINYAPLSFSFTNEQKGLVIVKDAIIL</sequence>
<organism>
    <name type="scientific">Saccharomyces cerevisiae (strain Lalvin EC1118 / Prise de mousse)</name>
    <name type="common">Baker's yeast</name>
    <dbReference type="NCBI Taxonomy" id="643680"/>
    <lineage>
        <taxon>Eukaryota</taxon>
        <taxon>Fungi</taxon>
        <taxon>Dikarya</taxon>
        <taxon>Ascomycota</taxon>
        <taxon>Saccharomycotina</taxon>
        <taxon>Saccharomycetes</taxon>
        <taxon>Saccharomycetales</taxon>
        <taxon>Saccharomycetaceae</taxon>
        <taxon>Saccharomyces</taxon>
    </lineage>
</organism>
<proteinExistence type="inferred from homology"/>
<keyword id="KW-0325">Glycoprotein</keyword>
<keyword id="KW-0378">Hydrolase</keyword>
<keyword id="KW-0472">Membrane</keyword>
<keyword id="KW-0479">Metal-binding</keyword>
<keyword id="KW-0482">Metalloprotease</keyword>
<keyword id="KW-0645">Protease</keyword>
<keyword id="KW-0812">Transmembrane</keyword>
<keyword id="KW-1133">Transmembrane helix</keyword>
<keyword id="KW-0926">Vacuole</keyword>
<keyword id="KW-0862">Zinc</keyword>
<name>PFF1_YEAS8</name>
<protein>
    <recommendedName>
        <fullName evidence="1">Vacuolar membrane protease</fullName>
        <ecNumber evidence="6">3.4.-.-</ecNumber>
    </recommendedName>
    <alternativeName>
        <fullName evidence="1">FXNA-related family protease 1</fullName>
    </alternativeName>
</protein>
<dbReference type="EC" id="3.4.-.-" evidence="6"/>
<dbReference type="EMBL" id="FN393060">
    <property type="protein sequence ID" value="CBK39150.1"/>
    <property type="molecule type" value="Genomic_DNA"/>
</dbReference>
<dbReference type="SMR" id="D3UEH0"/>
<dbReference type="HOGENOM" id="CLU_006412_1_0_1"/>
<dbReference type="OrthoDB" id="36254at4893"/>
<dbReference type="Proteomes" id="UP000000286">
    <property type="component" value="Chromosome II, Scaffold EC1118_1B15"/>
</dbReference>
<dbReference type="GO" id="GO:0005774">
    <property type="term" value="C:vacuolar membrane"/>
    <property type="evidence" value="ECO:0007669"/>
    <property type="project" value="UniProtKB-SubCell"/>
</dbReference>
<dbReference type="GO" id="GO:0046872">
    <property type="term" value="F:metal ion binding"/>
    <property type="evidence" value="ECO:0007669"/>
    <property type="project" value="UniProtKB-KW"/>
</dbReference>
<dbReference type="GO" id="GO:0008235">
    <property type="term" value="F:metalloexopeptidase activity"/>
    <property type="evidence" value="ECO:0007669"/>
    <property type="project" value="InterPro"/>
</dbReference>
<dbReference type="GO" id="GO:0006508">
    <property type="term" value="P:proteolysis"/>
    <property type="evidence" value="ECO:0007669"/>
    <property type="project" value="UniProtKB-KW"/>
</dbReference>
<dbReference type="CDD" id="cd03875">
    <property type="entry name" value="M28_Fxna_like"/>
    <property type="match status" value="1"/>
</dbReference>
<dbReference type="FunFam" id="3.40.630.10:FF:000057">
    <property type="entry name" value="Vacuolar membrane protease"/>
    <property type="match status" value="1"/>
</dbReference>
<dbReference type="Gene3D" id="3.40.630.10">
    <property type="entry name" value="Zn peptidases"/>
    <property type="match status" value="1"/>
</dbReference>
<dbReference type="InterPro" id="IPR048024">
    <property type="entry name" value="Fxna-like_M28_dom"/>
</dbReference>
<dbReference type="InterPro" id="IPR045175">
    <property type="entry name" value="M28_fam"/>
</dbReference>
<dbReference type="InterPro" id="IPR007484">
    <property type="entry name" value="Peptidase_M28"/>
</dbReference>
<dbReference type="InterPro" id="IPR053975">
    <property type="entry name" value="PFF1_C"/>
</dbReference>
<dbReference type="InterPro" id="IPR053976">
    <property type="entry name" value="PFF1_TM"/>
</dbReference>
<dbReference type="PANTHER" id="PTHR12147">
    <property type="entry name" value="METALLOPEPTIDASE M28 FAMILY MEMBER"/>
    <property type="match status" value="1"/>
</dbReference>
<dbReference type="PANTHER" id="PTHR12147:SF58">
    <property type="entry name" value="VACUOLAR MEMBRANE PROTEASE"/>
    <property type="match status" value="1"/>
</dbReference>
<dbReference type="Pfam" id="PF04389">
    <property type="entry name" value="Peptidase_M28"/>
    <property type="match status" value="1"/>
</dbReference>
<dbReference type="Pfam" id="PF22250">
    <property type="entry name" value="PFF1_C"/>
    <property type="match status" value="1"/>
</dbReference>
<dbReference type="Pfam" id="PF22251">
    <property type="entry name" value="PFF1_TM"/>
    <property type="match status" value="1"/>
</dbReference>
<dbReference type="SUPFAM" id="SSF53187">
    <property type="entry name" value="Zn-dependent exopeptidases"/>
    <property type="match status" value="1"/>
</dbReference>
<reference key="1">
    <citation type="journal article" date="2009" name="Proc. Natl. Acad. Sci. U.S.A.">
        <title>Eukaryote-to-eukaryote gene transfer events revealed by the genome sequence of the wine yeast Saccharomyces cerevisiae EC1118.</title>
        <authorList>
            <person name="Novo M."/>
            <person name="Bigey F."/>
            <person name="Beyne E."/>
            <person name="Galeote V."/>
            <person name="Gavory F."/>
            <person name="Mallet S."/>
            <person name="Cambon B."/>
            <person name="Legras J.-L."/>
            <person name="Wincker P."/>
            <person name="Casaregola S."/>
            <person name="Dequin S."/>
        </authorList>
    </citation>
    <scope>NUCLEOTIDE SEQUENCE [LARGE SCALE GENOMIC DNA]</scope>
    <source>
        <strain>Lalvin EC1118 / Prise de mousse</strain>
    </source>
</reference>
<gene>
    <name type="ORF">EC1118_1B15_2135g</name>
</gene>
<feature type="chain" id="PRO_0000411754" description="Vacuolar membrane protease">
    <location>
        <begin position="1"/>
        <end position="976"/>
    </location>
</feature>
<feature type="topological domain" description="Cytoplasmic" evidence="1">
    <location>
        <begin position="1"/>
        <end position="15"/>
    </location>
</feature>
<feature type="transmembrane region" description="Helical; Name=1" evidence="3">
    <location>
        <begin position="16"/>
        <end position="36"/>
    </location>
</feature>
<feature type="topological domain" description="Vacuolar" evidence="1">
    <location>
        <begin position="37"/>
        <end position="359"/>
    </location>
</feature>
<feature type="transmembrane region" description="Helical; Name=2" evidence="3">
    <location>
        <begin position="360"/>
        <end position="380"/>
    </location>
</feature>
<feature type="topological domain" description="Cytoplasmic" evidence="1">
    <location>
        <begin position="381"/>
        <end position="392"/>
    </location>
</feature>
<feature type="transmembrane region" description="Helical; Name=3" evidence="3">
    <location>
        <begin position="393"/>
        <end position="412"/>
    </location>
</feature>
<feature type="topological domain" description="Vacuolar" evidence="1">
    <location>
        <begin position="413"/>
        <end position="428"/>
    </location>
</feature>
<feature type="transmembrane region" description="Helical; Name=4" evidence="3">
    <location>
        <begin position="429"/>
        <end position="449"/>
    </location>
</feature>
<feature type="topological domain" description="Cytoplasmic" evidence="1">
    <location>
        <begin position="450"/>
        <end position="461"/>
    </location>
</feature>
<feature type="transmembrane region" description="Helical; Name=5" evidence="3">
    <location>
        <begin position="462"/>
        <end position="482"/>
    </location>
</feature>
<feature type="topological domain" description="Vacuolar" evidence="1">
    <location>
        <begin position="483"/>
        <end position="496"/>
    </location>
</feature>
<feature type="transmembrane region" description="Helical; Name=6" evidence="3">
    <location>
        <begin position="497"/>
        <end position="517"/>
    </location>
</feature>
<feature type="topological domain" description="Cytoplasmic" evidence="1">
    <location>
        <begin position="518"/>
        <end position="627"/>
    </location>
</feature>
<feature type="transmembrane region" description="Helical; Name=7" evidence="3">
    <location>
        <begin position="628"/>
        <end position="648"/>
    </location>
</feature>
<feature type="topological domain" description="Vacuolar" evidence="1">
    <location>
        <begin position="649"/>
        <end position="668"/>
    </location>
</feature>
<feature type="transmembrane region" description="Helical; Name=8" evidence="3">
    <location>
        <begin position="669"/>
        <end position="689"/>
    </location>
</feature>
<feature type="topological domain" description="Cytoplasmic" evidence="1">
    <location>
        <begin position="690"/>
        <end position="692"/>
    </location>
</feature>
<feature type="transmembrane region" description="Helical; Name=9" evidence="3">
    <location>
        <begin position="693"/>
        <end position="713"/>
    </location>
</feature>
<feature type="topological domain" description="Vacuolar" evidence="1">
    <location>
        <begin position="714"/>
        <end position="976"/>
    </location>
</feature>
<feature type="region of interest" description="Disordered" evidence="5">
    <location>
        <begin position="528"/>
        <end position="610"/>
    </location>
</feature>
<feature type="compositionally biased region" description="Polar residues" evidence="5">
    <location>
        <begin position="549"/>
        <end position="558"/>
    </location>
</feature>
<feature type="compositionally biased region" description="Low complexity" evidence="5">
    <location>
        <begin position="559"/>
        <end position="570"/>
    </location>
</feature>
<feature type="compositionally biased region" description="Basic and acidic residues" evidence="5">
    <location>
        <begin position="582"/>
        <end position="601"/>
    </location>
</feature>
<feature type="active site" description="Proton acceptor" evidence="2">
    <location>
        <position position="200"/>
    </location>
</feature>
<feature type="binding site" evidence="2">
    <location>
        <position position="156"/>
    </location>
    <ligand>
        <name>Zn(2+)</name>
        <dbReference type="ChEBI" id="CHEBI:29105"/>
        <label>1</label>
        <note>catalytic</note>
    </ligand>
</feature>
<feature type="binding site" evidence="2">
    <location>
        <position position="168"/>
    </location>
    <ligand>
        <name>Zn(2+)</name>
        <dbReference type="ChEBI" id="CHEBI:29105"/>
        <label>1</label>
        <note>catalytic</note>
    </ligand>
</feature>
<feature type="binding site" evidence="2">
    <location>
        <position position="168"/>
    </location>
    <ligand>
        <name>Zn(2+)</name>
        <dbReference type="ChEBI" id="CHEBI:29105"/>
        <label>2</label>
        <note>catalytic</note>
    </ligand>
</feature>
<feature type="binding site" evidence="2">
    <location>
        <position position="201"/>
    </location>
    <ligand>
        <name>Zn(2+)</name>
        <dbReference type="ChEBI" id="CHEBI:29105"/>
        <label>2</label>
        <note>catalytic</note>
    </ligand>
</feature>
<feature type="binding site" evidence="2">
    <location>
        <position position="226"/>
    </location>
    <ligand>
        <name>Zn(2+)</name>
        <dbReference type="ChEBI" id="CHEBI:29105"/>
        <label>1</label>
        <note>catalytic</note>
    </ligand>
</feature>
<feature type="binding site" evidence="2">
    <location>
        <position position="300"/>
    </location>
    <ligand>
        <name>Zn(2+)</name>
        <dbReference type="ChEBI" id="CHEBI:29105"/>
        <label>2</label>
        <note>catalytic</note>
    </ligand>
</feature>
<feature type="site" description="Transition state stabilizer" evidence="2">
    <location>
        <position position="299"/>
    </location>
</feature>
<feature type="glycosylation site" description="N-linked (GlcNAc...) asparagine" evidence="4">
    <location>
        <position position="96"/>
    </location>
</feature>
<feature type="glycosylation site" description="N-linked (GlcNAc...) asparagine" evidence="4">
    <location>
        <position position="121"/>
    </location>
</feature>
<feature type="glycosylation site" description="N-linked (GlcNAc...) asparagine" evidence="4">
    <location>
        <position position="189"/>
    </location>
</feature>
<feature type="glycosylation site" description="N-linked (GlcNAc...) asparagine" evidence="4">
    <location>
        <position position="212"/>
    </location>
</feature>
<feature type="glycosylation site" description="N-linked (GlcNAc...) asparagine" evidence="4">
    <location>
        <position position="217"/>
    </location>
</feature>
<feature type="glycosylation site" description="N-linked (GlcNAc...) asparagine" evidence="4">
    <location>
        <position position="656"/>
    </location>
</feature>
<feature type="glycosylation site" description="N-linked (GlcNAc...) asparagine" evidence="4">
    <location>
        <position position="768"/>
    </location>
</feature>
<feature type="glycosylation site" description="N-linked (GlcNAc...) asparagine" evidence="4">
    <location>
        <position position="796"/>
    </location>
</feature>
<feature type="glycosylation site" description="N-linked (GlcNAc...) asparagine" evidence="4">
    <location>
        <position position="811"/>
    </location>
</feature>
<feature type="glycosylation site" description="N-linked (GlcNAc...) asparagine" evidence="4">
    <location>
        <position position="866"/>
    </location>
</feature>
<feature type="glycosylation site" description="N-linked (GlcNAc...) asparagine" evidence="4">
    <location>
        <position position="937"/>
    </location>
</feature>